<proteinExistence type="evidence at protein level"/>
<feature type="chain" id="PRO_0000249823" description="Decapping and exoribonuclease protein">
    <location>
        <begin position="1"/>
        <end position="397"/>
    </location>
</feature>
<feature type="region of interest" description="Disordered" evidence="3">
    <location>
        <begin position="1"/>
        <end position="30"/>
    </location>
</feature>
<feature type="region of interest" description="Adenosine 3',5'-bisphosphate; inhibitor" evidence="6">
    <location>
        <begin position="253"/>
        <end position="256"/>
    </location>
</feature>
<feature type="compositionally biased region" description="Basic residues" evidence="3">
    <location>
        <begin position="1"/>
        <end position="10"/>
    </location>
</feature>
<feature type="binding site" evidence="4 5">
    <location>
        <position position="58"/>
    </location>
    <ligand>
        <name>substrate</name>
    </ligand>
</feature>
<feature type="binding site" evidence="4">
    <location>
        <position position="101"/>
    </location>
    <ligand>
        <name>substrate</name>
    </ligand>
</feature>
<feature type="binding site" evidence="4 5">
    <location>
        <begin position="131"/>
        <end position="133"/>
    </location>
    <ligand>
        <name>substrate</name>
    </ligand>
</feature>
<feature type="binding site" evidence="6">
    <location>
        <position position="185"/>
    </location>
    <ligand>
        <name>adenosine 3',5'-bisphosphate</name>
        <dbReference type="ChEBI" id="CHEBI:58343"/>
        <note>inhibitor</note>
    </ligand>
</feature>
<feature type="binding site" evidence="4">
    <location>
        <position position="192"/>
    </location>
    <ligand>
        <name>Mg(2+)</name>
        <dbReference type="ChEBI" id="CHEBI:18420"/>
        <label>1</label>
    </ligand>
</feature>
<feature type="binding site" evidence="4">
    <location>
        <position position="192"/>
    </location>
    <ligand>
        <name>Mg(2+)</name>
        <dbReference type="ChEBI" id="CHEBI:18420"/>
        <label>2</label>
    </ligand>
</feature>
<feature type="binding site" evidence="4">
    <location>
        <position position="217"/>
    </location>
    <ligand>
        <name>substrate</name>
    </ligand>
</feature>
<feature type="binding site" evidence="4 6">
    <location>
        <position position="234"/>
    </location>
    <ligand>
        <name>Mg(2+)</name>
        <dbReference type="ChEBI" id="CHEBI:18420"/>
        <label>2</label>
    </ligand>
</feature>
<feature type="binding site" evidence="4 5">
    <location>
        <position position="234"/>
    </location>
    <ligand>
        <name>substrate</name>
    </ligand>
</feature>
<feature type="binding site" evidence="6">
    <location>
        <position position="236"/>
    </location>
    <ligand>
        <name>adenosine 3',5'-bisphosphate</name>
        <dbReference type="ChEBI" id="CHEBI:58343"/>
        <note>inhibitor</note>
    </ligand>
</feature>
<feature type="binding site" evidence="4 6 12">
    <location>
        <position position="236"/>
    </location>
    <ligand>
        <name>Mg(2+)</name>
        <dbReference type="ChEBI" id="CHEBI:18420"/>
        <label>1</label>
    </ligand>
</feature>
<feature type="binding site" evidence="4 6">
    <location>
        <position position="236"/>
    </location>
    <ligand>
        <name>Mg(2+)</name>
        <dbReference type="ChEBI" id="CHEBI:18420"/>
        <label>2</label>
    </ligand>
</feature>
<feature type="binding site" evidence="4 6 12">
    <location>
        <position position="253"/>
    </location>
    <ligand>
        <name>Mg(2+)</name>
        <dbReference type="ChEBI" id="CHEBI:18420"/>
        <label>1</label>
    </ligand>
</feature>
<feature type="binding site" evidence="4 6 12">
    <location>
        <position position="254"/>
    </location>
    <ligand>
        <name>Mg(2+)</name>
        <dbReference type="ChEBI" id="CHEBI:18420"/>
        <label>1</label>
    </ligand>
</feature>
<feature type="binding site" evidence="4 5">
    <location>
        <position position="255"/>
    </location>
    <ligand>
        <name>substrate</name>
    </ligand>
</feature>
<feature type="binding site" evidence="6">
    <location>
        <position position="280"/>
    </location>
    <ligand>
        <name>adenosine 3',5'-bisphosphate</name>
        <dbReference type="ChEBI" id="CHEBI:58343"/>
        <note>inhibitor</note>
    </ligand>
</feature>
<feature type="binding site" evidence="4 5">
    <location>
        <position position="280"/>
    </location>
    <ligand>
        <name>substrate</name>
    </ligand>
</feature>
<feature type="modified residue" description="Phosphothreonine" evidence="2">
    <location>
        <position position="392"/>
    </location>
</feature>
<feature type="modified residue" description="Phosphoserine" evidence="18">
    <location>
        <position position="394"/>
    </location>
</feature>
<feature type="mutagenesis site" description="Abolishes the decapping activity on both incomplete m7G cap and NAD-cap RNAs. Abolishes the 5'-3' exoribonuclease activity." evidence="4 5 6">
    <original>E</original>
    <variation>A</variation>
    <location>
        <position position="234"/>
    </location>
</feature>
<feature type="mutagenesis site" description="Abolishes the decapping activity on both incomplete m7G cap and NAD-cap RNAs." evidence="4 5">
    <original>D</original>
    <variation>A</variation>
    <location>
        <position position="236"/>
    </location>
</feature>
<feature type="sequence conflict" description="In Ref. 1; AAC05281." evidence="11" ref="1">
    <original>N</original>
    <variation>H</variation>
    <location>
        <position position="20"/>
    </location>
</feature>
<feature type="sequence conflict" description="In Ref. 1; AAC05281." evidence="11" ref="1">
    <original>S</original>
    <variation>L</variation>
    <location>
        <position position="28"/>
    </location>
</feature>
<feature type="helix" evidence="20">
    <location>
        <begin position="33"/>
        <end position="35"/>
    </location>
</feature>
<feature type="strand" evidence="20">
    <location>
        <begin position="47"/>
        <end position="54"/>
    </location>
</feature>
<feature type="strand" evidence="20">
    <location>
        <begin position="60"/>
        <end position="64"/>
    </location>
</feature>
<feature type="strand" evidence="22">
    <location>
        <begin position="75"/>
        <end position="77"/>
    </location>
</feature>
<feature type="turn" evidence="20">
    <location>
        <begin position="84"/>
        <end position="91"/>
    </location>
</feature>
<feature type="strand" evidence="19">
    <location>
        <begin position="97"/>
        <end position="99"/>
    </location>
</feature>
<feature type="helix" evidence="20">
    <location>
        <begin position="104"/>
        <end position="113"/>
    </location>
</feature>
<feature type="helix" evidence="20">
    <location>
        <begin position="114"/>
        <end position="116"/>
    </location>
</feature>
<feature type="strand" evidence="21">
    <location>
        <begin position="118"/>
        <end position="120"/>
    </location>
</feature>
<feature type="turn" evidence="20">
    <location>
        <begin position="121"/>
        <end position="123"/>
    </location>
</feature>
<feature type="helix" evidence="20">
    <location>
        <begin position="124"/>
        <end position="126"/>
    </location>
</feature>
<feature type="strand" evidence="20">
    <location>
        <begin position="128"/>
        <end position="131"/>
    </location>
</feature>
<feature type="helix" evidence="20">
    <location>
        <begin position="132"/>
        <end position="140"/>
    </location>
</feature>
<feature type="helix" evidence="20">
    <location>
        <begin position="141"/>
        <end position="143"/>
    </location>
</feature>
<feature type="strand" evidence="20">
    <location>
        <begin position="149"/>
        <end position="156"/>
    </location>
</feature>
<feature type="strand" evidence="20">
    <location>
        <begin position="159"/>
        <end position="164"/>
    </location>
</feature>
<feature type="helix" evidence="20">
    <location>
        <begin position="168"/>
        <end position="175"/>
    </location>
</feature>
<feature type="helix" evidence="20">
    <location>
        <begin position="179"/>
        <end position="195"/>
    </location>
</feature>
<feature type="strand" evidence="20">
    <location>
        <begin position="196"/>
        <end position="199"/>
    </location>
</feature>
<feature type="strand" evidence="20">
    <location>
        <begin position="215"/>
        <end position="224"/>
    </location>
</feature>
<feature type="strand" evidence="20">
    <location>
        <begin position="227"/>
        <end position="234"/>
    </location>
</feature>
<feature type="strand" evidence="22">
    <location>
        <begin position="242"/>
        <end position="244"/>
    </location>
</feature>
<feature type="turn" evidence="20">
    <location>
        <begin position="247"/>
        <end position="250"/>
    </location>
</feature>
<feature type="strand" evidence="20">
    <location>
        <begin position="251"/>
        <end position="258"/>
    </location>
</feature>
<feature type="helix" evidence="20">
    <location>
        <begin position="263"/>
        <end position="271"/>
    </location>
</feature>
<feature type="helix" evidence="20">
    <location>
        <begin position="273"/>
        <end position="282"/>
    </location>
</feature>
<feature type="turn" evidence="20">
    <location>
        <begin position="283"/>
        <end position="285"/>
    </location>
</feature>
<feature type="strand" evidence="20">
    <location>
        <begin position="288"/>
        <end position="294"/>
    </location>
</feature>
<feature type="strand" evidence="20">
    <location>
        <begin position="298"/>
        <end position="307"/>
    </location>
</feature>
<feature type="helix" evidence="20">
    <location>
        <begin position="308"/>
        <end position="315"/>
    </location>
</feature>
<feature type="helix" evidence="20">
    <location>
        <begin position="324"/>
        <end position="341"/>
    </location>
</feature>
<feature type="strand" evidence="20">
    <location>
        <begin position="349"/>
        <end position="355"/>
    </location>
</feature>
<feature type="strand" evidence="20">
    <location>
        <begin position="361"/>
        <end position="368"/>
    </location>
</feature>
<feature type="turn" evidence="20">
    <location>
        <begin position="369"/>
        <end position="371"/>
    </location>
</feature>
<feature type="helix" evidence="20">
    <location>
        <begin position="376"/>
        <end position="383"/>
    </location>
</feature>
<dbReference type="EC" id="3.6.1.-" evidence="4 5"/>
<dbReference type="EC" id="3.1.13.-" evidence="4 6"/>
<dbReference type="EMBL" id="AF049850">
    <property type="protein sequence ID" value="AAC05281.1"/>
    <property type="molecule type" value="Genomic_DNA"/>
</dbReference>
<dbReference type="EMBL" id="BC004713">
    <property type="protein sequence ID" value="AAH04713.1"/>
    <property type="molecule type" value="mRNA"/>
</dbReference>
<dbReference type="CCDS" id="CCDS28660.1"/>
<dbReference type="RefSeq" id="NP_001157242.1">
    <property type="nucleotide sequence ID" value="NM_001163770.1"/>
</dbReference>
<dbReference type="RefSeq" id="NP_291091.2">
    <property type="nucleotide sequence ID" value="NM_033613.2"/>
</dbReference>
<dbReference type="PDB" id="3FQI">
    <property type="method" value="X-ray"/>
    <property type="resolution" value="2.01 A"/>
    <property type="chains" value="A=1-397"/>
</dbReference>
<dbReference type="PDB" id="3FQJ">
    <property type="method" value="X-ray"/>
    <property type="resolution" value="2.62 A"/>
    <property type="chains" value="A=1-397"/>
</dbReference>
<dbReference type="PDB" id="4J7L">
    <property type="method" value="X-ray"/>
    <property type="resolution" value="1.80 A"/>
    <property type="chains" value="A=27-384"/>
</dbReference>
<dbReference type="PDB" id="4J7M">
    <property type="method" value="X-ray"/>
    <property type="resolution" value="1.70 A"/>
    <property type="chains" value="A=27-384"/>
</dbReference>
<dbReference type="PDB" id="4J7N">
    <property type="method" value="X-ray"/>
    <property type="resolution" value="1.50 A"/>
    <property type="chains" value="A=27-384"/>
</dbReference>
<dbReference type="PDB" id="5ULI">
    <property type="method" value="X-ray"/>
    <property type="resolution" value="2.10 A"/>
    <property type="chains" value="A=27-384"/>
</dbReference>
<dbReference type="PDB" id="6AIX">
    <property type="method" value="X-ray"/>
    <property type="resolution" value="1.80 A"/>
    <property type="chains" value="A=27-384"/>
</dbReference>
<dbReference type="PDB" id="6AIY">
    <property type="method" value="X-ray"/>
    <property type="resolution" value="1.90 A"/>
    <property type="chains" value="A=27-384"/>
</dbReference>
<dbReference type="PDB" id="6WRE">
    <property type="method" value="X-ray"/>
    <property type="resolution" value="2.00 A"/>
    <property type="chains" value="A=27-384"/>
</dbReference>
<dbReference type="PDB" id="6WUF">
    <property type="method" value="X-ray"/>
    <property type="resolution" value="1.60 A"/>
    <property type="chains" value="A=1-397"/>
</dbReference>
<dbReference type="PDB" id="6WUK">
    <property type="method" value="X-ray"/>
    <property type="resolution" value="1.60 A"/>
    <property type="chains" value="A=1-397"/>
</dbReference>
<dbReference type="PDBsum" id="3FQI"/>
<dbReference type="PDBsum" id="3FQJ"/>
<dbReference type="PDBsum" id="4J7L"/>
<dbReference type="PDBsum" id="4J7M"/>
<dbReference type="PDBsum" id="4J7N"/>
<dbReference type="PDBsum" id="5ULI"/>
<dbReference type="PDBsum" id="6AIX"/>
<dbReference type="PDBsum" id="6AIY"/>
<dbReference type="PDBsum" id="6WRE"/>
<dbReference type="PDBsum" id="6WUF"/>
<dbReference type="PDBsum" id="6WUK"/>
<dbReference type="SMR" id="O70348"/>
<dbReference type="FunCoup" id="O70348">
    <property type="interactions" value="2420"/>
</dbReference>
<dbReference type="STRING" id="10090.ENSMUSP00000047018"/>
<dbReference type="iPTMnet" id="O70348"/>
<dbReference type="PhosphoSitePlus" id="O70348"/>
<dbReference type="jPOST" id="O70348"/>
<dbReference type="PaxDb" id="10090-ENSMUSP00000047018"/>
<dbReference type="ProteomicsDB" id="277793"/>
<dbReference type="Pumba" id="O70348"/>
<dbReference type="GeneID" id="112403"/>
<dbReference type="KEGG" id="mmu:112403"/>
<dbReference type="UCSC" id="uc008cdr.2">
    <property type="organism name" value="mouse"/>
</dbReference>
<dbReference type="AGR" id="MGI:1890444"/>
<dbReference type="CTD" id="1797"/>
<dbReference type="MGI" id="MGI:1890444">
    <property type="gene designation" value="Dxo"/>
</dbReference>
<dbReference type="eggNOG" id="KOG1982">
    <property type="taxonomic scope" value="Eukaryota"/>
</dbReference>
<dbReference type="InParanoid" id="O70348"/>
<dbReference type="OrthoDB" id="5853397at2759"/>
<dbReference type="PhylomeDB" id="O70348"/>
<dbReference type="TreeFam" id="TF322812"/>
<dbReference type="BioGRID-ORCS" id="112403">
    <property type="hits" value="2 hits in 82 CRISPR screens"/>
</dbReference>
<dbReference type="ChiTaRS" id="Dxo">
    <property type="organism name" value="mouse"/>
</dbReference>
<dbReference type="EvolutionaryTrace" id="O70348"/>
<dbReference type="PRO" id="PR:O70348"/>
<dbReference type="Proteomes" id="UP000000589">
    <property type="component" value="Unplaced"/>
</dbReference>
<dbReference type="RNAct" id="O70348">
    <property type="molecule type" value="protein"/>
</dbReference>
<dbReference type="GO" id="GO:0005634">
    <property type="term" value="C:nucleus"/>
    <property type="evidence" value="ECO:0000250"/>
    <property type="project" value="UniProtKB"/>
</dbReference>
<dbReference type="GO" id="GO:0008409">
    <property type="term" value="F:5'-3' exonuclease activity"/>
    <property type="evidence" value="ECO:0000314"/>
    <property type="project" value="UniProtKB"/>
</dbReference>
<dbReference type="GO" id="GO:0000287">
    <property type="term" value="F:magnesium ion binding"/>
    <property type="evidence" value="ECO:0000314"/>
    <property type="project" value="UniProtKB"/>
</dbReference>
<dbReference type="GO" id="GO:0034353">
    <property type="term" value="F:mRNA 5'-diphosphatase activity"/>
    <property type="evidence" value="ECO:0000314"/>
    <property type="project" value="UniProtKB"/>
</dbReference>
<dbReference type="GO" id="GO:0003729">
    <property type="term" value="F:mRNA binding"/>
    <property type="evidence" value="ECO:0000314"/>
    <property type="project" value="UniProtKB"/>
</dbReference>
<dbReference type="GO" id="GO:0000166">
    <property type="term" value="F:nucleotide binding"/>
    <property type="evidence" value="ECO:0007669"/>
    <property type="project" value="UniProtKB-KW"/>
</dbReference>
<dbReference type="GO" id="GO:0110152">
    <property type="term" value="F:RNA NAD+-cap (NAD+-forming) hydrolase activity"/>
    <property type="evidence" value="ECO:0000314"/>
    <property type="project" value="UniProtKB"/>
</dbReference>
<dbReference type="GO" id="GO:0006402">
    <property type="term" value="P:mRNA catabolic process"/>
    <property type="evidence" value="ECO:0000314"/>
    <property type="project" value="UniProtKB"/>
</dbReference>
<dbReference type="GO" id="GO:0110155">
    <property type="term" value="P:NAD-cap decapping"/>
    <property type="evidence" value="ECO:0000314"/>
    <property type="project" value="UniProtKB"/>
</dbReference>
<dbReference type="GO" id="GO:0071028">
    <property type="term" value="P:nuclear mRNA surveillance"/>
    <property type="evidence" value="ECO:0000315"/>
    <property type="project" value="UniProtKB"/>
</dbReference>
<dbReference type="GO" id="GO:0090304">
    <property type="term" value="P:nucleic acid metabolic process"/>
    <property type="evidence" value="ECO:0000314"/>
    <property type="project" value="UniProtKB"/>
</dbReference>
<dbReference type="GO" id="GO:0050779">
    <property type="term" value="P:RNA destabilization"/>
    <property type="evidence" value="ECO:0000315"/>
    <property type="project" value="UniProtKB"/>
</dbReference>
<dbReference type="InterPro" id="IPR013961">
    <property type="entry name" value="RAI1"/>
</dbReference>
<dbReference type="InterPro" id="IPR039039">
    <property type="entry name" value="RAI1-like_fam"/>
</dbReference>
<dbReference type="PANTHER" id="PTHR12395:SF9">
    <property type="entry name" value="DECAPPING AND EXORIBONUCLEASE PROTEIN"/>
    <property type="match status" value="1"/>
</dbReference>
<dbReference type="PANTHER" id="PTHR12395">
    <property type="entry name" value="DOM-3 RELATED"/>
    <property type="match status" value="1"/>
</dbReference>
<dbReference type="Pfam" id="PF08652">
    <property type="entry name" value="RAI1"/>
    <property type="match status" value="1"/>
</dbReference>
<organism>
    <name type="scientific">Mus musculus</name>
    <name type="common">Mouse</name>
    <dbReference type="NCBI Taxonomy" id="10090"/>
    <lineage>
        <taxon>Eukaryota</taxon>
        <taxon>Metazoa</taxon>
        <taxon>Chordata</taxon>
        <taxon>Craniata</taxon>
        <taxon>Vertebrata</taxon>
        <taxon>Euteleostomi</taxon>
        <taxon>Mammalia</taxon>
        <taxon>Eutheria</taxon>
        <taxon>Euarchontoglires</taxon>
        <taxon>Glires</taxon>
        <taxon>Rodentia</taxon>
        <taxon>Myomorpha</taxon>
        <taxon>Muroidea</taxon>
        <taxon>Muridae</taxon>
        <taxon>Murinae</taxon>
        <taxon>Mus</taxon>
        <taxon>Mus</taxon>
    </lineage>
</organism>
<protein>
    <recommendedName>
        <fullName evidence="10">Decapping and exoribonuclease protein</fullName>
        <shortName evidence="10">DXO</shortName>
        <ecNumber evidence="4">3.6.1.-</ecNumber>
    </recommendedName>
    <alternativeName>
        <fullName evidence="11">5'-3' exoribonuclease DXO</fullName>
        <ecNumber evidence="4 6">3.1.13.-</ecNumber>
    </alternativeName>
    <alternativeName>
        <fullName evidence="9">Dom-3 homolog Z</fullName>
    </alternativeName>
    <alternativeName>
        <fullName evidence="11">NAD-capped RNA hydrolase DXO</fullName>
        <shortName evidence="11">DeNADding enzyme DXO</shortName>
        <ecNumber evidence="5">3.6.1.-</ecNumber>
    </alternativeName>
</protein>
<comment type="function">
    <text evidence="1 4 5 6 7 8">Decapping enzyme for NAD-capped RNAs: specifically hydrolyzes the nicotinamide adenine dinucleotide (NAD) cap from a subset of RNAs by removing the entire NAD moiety from the 5'-end of an NAD-capped RNA (PubMed:28283058, PubMed:32374864). The NAD-cap is present at the 5'-end of some RNAs and snoRNAs (PubMed:28283058). In contrast to the canonical 5'-end N7 methylguanosine (m7G) cap, the NAD cap promotes mRNA decay (PubMed:28283058). Preferentially acts on NAD-capped transcripts in response to environmental stress (By similarity). Also acts as a non-canonical decapping enzyme that removes the entire cap structure of m7G capped or incompletely capped RNAs and mediates their subsequent degradation (PubMed:23523372, PubMed:28283058). Specifically degrades pre-mRNAs with a defective 5'-end m7G cap and is part of a pre-mRNA capping quality control (PubMed:23523372). Has decapping activity toward incomplete 5'-end m7G cap mRNAs such as unmethylated 5'-end-capped RNA (cap0), while it has no activity toward 2'-O-ribose methylated m7G cap (cap1) (PubMed:23523372). In contrast to canonical decapping enzymes DCP2 and NUDT16, which cleave the cap within the triphosphate linkage, the decapping activity releases the entire cap structure GpppN and a 5'-end monophosphate RNA (PubMed:23523372). Also has 5'-3' exoribonuclease activities: The 5'-end monophosphate RNA is then degraded by the 5'-3' exoribonuclease activity, enabling this enzyme to decap and degrade incompletely capped mRNAs (PubMed:23523372, PubMed:30180947). Also possesses RNA 5'-pyrophosphohydrolase activity by hydrolyzing the 5'-end triphosphate to release pyrophosphates (PubMed:23523372). Exhibits decapping activity towards FAD-capped RNAs (PubMed:32374864, PubMed:32432673). Exhibits decapping activity towards dpCoA-capped RNAs in vitro (PubMed:32374864, PubMed:32432673).</text>
</comment>
<comment type="catalytic activity">
    <reaction evidence="4">
        <text>a 5'-end triphospho-ribonucleoside in mRNA + H2O = a 5'-end phospho-ribonucleoside in mRNA + diphosphate + H(+)</text>
        <dbReference type="Rhea" id="RHEA:78683"/>
        <dbReference type="Rhea" id="RHEA-COMP:15692"/>
        <dbReference type="Rhea" id="RHEA-COMP:17164"/>
        <dbReference type="ChEBI" id="CHEBI:15377"/>
        <dbReference type="ChEBI" id="CHEBI:15378"/>
        <dbReference type="ChEBI" id="CHEBI:33019"/>
        <dbReference type="ChEBI" id="CHEBI:138282"/>
        <dbReference type="ChEBI" id="CHEBI:167618"/>
    </reaction>
    <physiologicalReaction direction="left-to-right" evidence="4">
        <dbReference type="Rhea" id="RHEA:78684"/>
    </physiologicalReaction>
</comment>
<comment type="catalytic activity">
    <reaction evidence="5 7">
        <text>a 5'-end NAD(+)-phospho-ribonucleoside in mRNA + H2O = a 5'-end phospho-ribonucleoside in mRNA + NAD(+) + H(+)</text>
        <dbReference type="Rhea" id="RHEA:60880"/>
        <dbReference type="Rhea" id="RHEA-COMP:15692"/>
        <dbReference type="Rhea" id="RHEA-COMP:15698"/>
        <dbReference type="ChEBI" id="CHEBI:15377"/>
        <dbReference type="ChEBI" id="CHEBI:15378"/>
        <dbReference type="ChEBI" id="CHEBI:57540"/>
        <dbReference type="ChEBI" id="CHEBI:138282"/>
        <dbReference type="ChEBI" id="CHEBI:144029"/>
    </reaction>
    <physiologicalReaction direction="left-to-right" evidence="5">
        <dbReference type="Rhea" id="RHEA:60881"/>
    </physiologicalReaction>
</comment>
<comment type="catalytic activity">
    <reaction evidence="5">
        <text>a 5'-end NAD(+)-phospho-ribonucleoside in snoRNA + H2O = a 5'-end phospho-ribonucleoside in snoRNA + NAD(+) + H(+)</text>
        <dbReference type="Rhea" id="RHEA:60892"/>
        <dbReference type="Rhea" id="RHEA-COMP:15699"/>
        <dbReference type="Rhea" id="RHEA-COMP:15700"/>
        <dbReference type="ChEBI" id="CHEBI:15377"/>
        <dbReference type="ChEBI" id="CHEBI:15378"/>
        <dbReference type="ChEBI" id="CHEBI:57540"/>
        <dbReference type="ChEBI" id="CHEBI:138282"/>
        <dbReference type="ChEBI" id="CHEBI:144029"/>
    </reaction>
    <physiologicalReaction direction="left-to-right" evidence="5">
        <dbReference type="Rhea" id="RHEA:60893"/>
    </physiologicalReaction>
</comment>
<comment type="catalytic activity">
    <reaction evidence="4">
        <text>a 5'-end (N(7)-methyl 5'-triphosphoguanosine)-ribonucleoside-ribonucleotide in mRNA + H2O = a (N(7)-methyl 5'-triphosphoguanosine)-nucleoside + a 5'-end phospho-ribonucleoside in mRNA + H(+)</text>
        <dbReference type="Rhea" id="RHEA:66928"/>
        <dbReference type="Rhea" id="RHEA-COMP:15692"/>
        <dbReference type="Rhea" id="RHEA-COMP:17313"/>
        <dbReference type="ChEBI" id="CHEBI:15377"/>
        <dbReference type="ChEBI" id="CHEBI:15378"/>
        <dbReference type="ChEBI" id="CHEBI:138282"/>
        <dbReference type="ChEBI" id="CHEBI:172876"/>
        <dbReference type="ChEBI" id="CHEBI:172877"/>
    </reaction>
    <physiologicalReaction direction="left-to-right" evidence="4">
        <dbReference type="Rhea" id="RHEA:66929"/>
    </physiologicalReaction>
</comment>
<comment type="catalytic activity">
    <reaction evidence="7 8">
        <text>a 5'-end FAD-phospho-ribonucleoside in mRNA + H2O = a 5'-end phospho-ribonucleoside in mRNA + FAD + H(+)</text>
        <dbReference type="Rhea" id="RHEA:67492"/>
        <dbReference type="Rhea" id="RHEA-COMP:15692"/>
        <dbReference type="Rhea" id="RHEA-COMP:17275"/>
        <dbReference type="ChEBI" id="CHEBI:15377"/>
        <dbReference type="ChEBI" id="CHEBI:15378"/>
        <dbReference type="ChEBI" id="CHEBI:57692"/>
        <dbReference type="ChEBI" id="CHEBI:138282"/>
        <dbReference type="ChEBI" id="CHEBI:172372"/>
    </reaction>
    <physiologicalReaction direction="left-to-right" evidence="14">
        <dbReference type="Rhea" id="RHEA:67493"/>
    </physiologicalReaction>
</comment>
<comment type="catalytic activity">
    <reaction evidence="13 14">
        <text>a 5'-end CoA-ribonucleoside in mRNA + H2O = 3'-dephospho-CoA + a 5'-end phospho-ribonucleoside in mRNA + H(+)</text>
        <dbReference type="Rhea" id="RHEA:67496"/>
        <dbReference type="Rhea" id="RHEA-COMP:15692"/>
        <dbReference type="Rhea" id="RHEA-COMP:17276"/>
        <dbReference type="ChEBI" id="CHEBI:15377"/>
        <dbReference type="ChEBI" id="CHEBI:15378"/>
        <dbReference type="ChEBI" id="CHEBI:57328"/>
        <dbReference type="ChEBI" id="CHEBI:138282"/>
        <dbReference type="ChEBI" id="CHEBI:172371"/>
    </reaction>
    <physiologicalReaction direction="left-to-right" evidence="14">
        <dbReference type="Rhea" id="RHEA:67497"/>
    </physiologicalReaction>
</comment>
<comment type="cofactor">
    <cofactor evidence="4 6">
        <name>Mg(2+)</name>
        <dbReference type="ChEBI" id="CHEBI:18420"/>
    </cofactor>
    <text evidence="4 6">Binds 2 magnesium ions.</text>
</comment>
<comment type="activity regulation">
    <text evidence="6">The 5'-3' exoribonuclease activity is inhibited by adenosine 3',5'-bisphosphate.</text>
</comment>
<comment type="subcellular location">
    <subcellularLocation>
        <location evidence="1">Nucleus</location>
    </subcellularLocation>
</comment>
<comment type="similarity">
    <text evidence="11">Belongs to the DXO/Dom3Z family.</text>
</comment>
<keyword id="KW-0002">3D-structure</keyword>
<keyword id="KW-0269">Exonuclease</keyword>
<keyword id="KW-0378">Hydrolase</keyword>
<keyword id="KW-0460">Magnesium</keyword>
<keyword id="KW-0479">Metal-binding</keyword>
<keyword id="KW-0540">Nuclease</keyword>
<keyword id="KW-0547">Nucleotide-binding</keyword>
<keyword id="KW-0539">Nucleus</keyword>
<keyword id="KW-0597">Phosphoprotein</keyword>
<keyword id="KW-1185">Reference proteome</keyword>
<keyword id="KW-0694">RNA-binding</keyword>
<accession>O70348</accession>
<accession>Q99KD8</accession>
<evidence type="ECO:0000250" key="1">
    <source>
        <dbReference type="UniProtKB" id="O77932"/>
    </source>
</evidence>
<evidence type="ECO:0000250" key="2">
    <source>
        <dbReference type="UniProtKB" id="Q6MG77"/>
    </source>
</evidence>
<evidence type="ECO:0000256" key="3">
    <source>
        <dbReference type="SAM" id="MobiDB-lite"/>
    </source>
</evidence>
<evidence type="ECO:0000269" key="4">
    <source>
    </source>
</evidence>
<evidence type="ECO:0000269" key="5">
    <source>
    </source>
</evidence>
<evidence type="ECO:0000269" key="6">
    <source>
    </source>
</evidence>
<evidence type="ECO:0000269" key="7">
    <source>
    </source>
</evidence>
<evidence type="ECO:0000269" key="8">
    <source>
    </source>
</evidence>
<evidence type="ECO:0000303" key="9">
    <source>
    </source>
</evidence>
<evidence type="ECO:0000303" key="10">
    <source>
    </source>
</evidence>
<evidence type="ECO:0000305" key="11"/>
<evidence type="ECO:0000305" key="12">
    <source>
    </source>
</evidence>
<evidence type="ECO:0000305" key="13">
    <source>
    </source>
</evidence>
<evidence type="ECO:0000305" key="14">
    <source>
    </source>
</evidence>
<evidence type="ECO:0007744" key="15">
    <source>
        <dbReference type="PDB" id="5ULI"/>
    </source>
</evidence>
<evidence type="ECO:0007744" key="16">
    <source>
        <dbReference type="PDB" id="6AIX"/>
    </source>
</evidence>
<evidence type="ECO:0007744" key="17">
    <source>
        <dbReference type="PDB" id="6AIY"/>
    </source>
</evidence>
<evidence type="ECO:0007744" key="18">
    <source>
    </source>
</evidence>
<evidence type="ECO:0007829" key="19">
    <source>
        <dbReference type="PDB" id="3FQJ"/>
    </source>
</evidence>
<evidence type="ECO:0007829" key="20">
    <source>
        <dbReference type="PDB" id="4J7N"/>
    </source>
</evidence>
<evidence type="ECO:0007829" key="21">
    <source>
        <dbReference type="PDB" id="6AIY"/>
    </source>
</evidence>
<evidence type="ECO:0007829" key="22">
    <source>
        <dbReference type="PDB" id="6WUK"/>
    </source>
</evidence>
<sequence>MEPRGTKRKAEKTEVEKPLNKLPRAVPSLRTQPSLYSGPFPFYRRPSELGCFSLDAQRQYHGDARALRYYSPPPINGPGPDFDLRDGYPDRYQPRDEEVQERLDHLLRWVLEHRNQLEGGPGWLAGATVTWRGHLTKLLTTPYERQEGWQLAASRFQGTLYLSEVETPAARAQRLARPPLLRELMYMGYKFEQYMCADKPGGSPDPSGEVNTNVAYCSVLRSRLGNHPLLFSGEVDCLNPQAPCTQPPSCYVELKTSKEMHSPGQWRSFYRHKLLKWWAQSFLPGVPHVVAGFRNPEGFVCSLKTFPTMEMFENVRNDREGWNPSVCMNFCAAFLSFAQSTVVQDDPRLVHLFSWEPGGPVTVSVHRDAPYAFLPSWYVETMTQDLPPLSKTPSPKD</sequence>
<reference key="1">
    <citation type="journal article" date="2003" name="Genome Res.">
        <title>Analysis of the gene-dense major histocompatibility complex class III region and its comparison to mouse.</title>
        <authorList>
            <person name="Xie T."/>
            <person name="Rowen L."/>
            <person name="Aguado B."/>
            <person name="Ahearn M.E."/>
            <person name="Madan A."/>
            <person name="Qin S."/>
            <person name="Campbell R.D."/>
            <person name="Hood L."/>
        </authorList>
    </citation>
    <scope>NUCLEOTIDE SEQUENCE [LARGE SCALE GENOMIC DNA]</scope>
    <source>
        <strain>129</strain>
    </source>
</reference>
<reference key="2">
    <citation type="journal article" date="2004" name="Genome Res.">
        <title>The status, quality, and expansion of the NIH full-length cDNA project: the Mammalian Gene Collection (MGC).</title>
        <authorList>
            <consortium name="The MGC Project Team"/>
        </authorList>
    </citation>
    <scope>NUCLEOTIDE SEQUENCE [LARGE SCALE MRNA]</scope>
    <source>
        <strain>FVB/N</strain>
        <tissue>Mammary gland</tissue>
    </source>
</reference>
<reference key="3">
    <citation type="journal article" date="2010" name="Cell">
        <title>A tissue-specific atlas of mouse protein phosphorylation and expression.</title>
        <authorList>
            <person name="Huttlin E.L."/>
            <person name="Jedrychowski M.P."/>
            <person name="Elias J.E."/>
            <person name="Goswami T."/>
            <person name="Rad R."/>
            <person name="Beausoleil S.A."/>
            <person name="Villen J."/>
            <person name="Haas W."/>
            <person name="Sowa M.E."/>
            <person name="Gygi S.P."/>
        </authorList>
    </citation>
    <scope>PHOSPHORYLATION [LARGE SCALE ANALYSIS] AT SER-394</scope>
    <scope>IDENTIFICATION BY MASS SPECTROMETRY [LARGE SCALE ANALYSIS]</scope>
    <source>
        <tissue>Pancreas</tissue>
        <tissue>Testis</tissue>
    </source>
</reference>
<reference key="4">
    <citation type="journal article" date="2020" name="Nucleic Acids Res.">
        <title>Mammalian Nudix proteins cleave nucleotide metabolite caps on RNAs.</title>
        <authorList>
            <person name="Sharma S."/>
            <person name="Grudzien-Nogalska E."/>
            <person name="Hamilton K."/>
            <person name="Jiao X."/>
            <person name="Yang J."/>
            <person name="Tong L."/>
            <person name="Kiledjian M."/>
        </authorList>
    </citation>
    <scope>FUNCTION</scope>
    <scope>CATALYTIC ACTIVITY</scope>
</reference>
<reference key="5">
    <citation type="journal article" date="2009" name="Nature">
        <title>Structure and function of the 5'--&gt;3' exoribonuclease Rat1 and its activating partner Rai1.</title>
        <authorList>
            <person name="Xiang S."/>
            <person name="Cooper-Morgan A."/>
            <person name="Jiao X."/>
            <person name="Kiledjian M."/>
            <person name="Manley J.L."/>
            <person name="Tong L."/>
        </authorList>
    </citation>
    <scope>X-RAY CRYSTALLOGRAPHY (2.01 ANGSTROMS) IN COMPLEX WITH GDP</scope>
</reference>
<reference key="6">
    <citation type="journal article" date="2013" name="Mol. Cell">
        <title>A mammalian pre-mRNA 5' end capping quality control mechanism and an unexpected link of capping to pre-mRNA processing.</title>
        <authorList>
            <person name="Jiao X."/>
            <person name="Chang J.H."/>
            <person name="Kilic T."/>
            <person name="Tong L."/>
            <person name="Kiledjian M."/>
        </authorList>
    </citation>
    <scope>X-RAY CRYSTALLOGRAPHY (1.50 ANGSTROMS) OF 27-397 IN COMPLEX WITH MAGNESIUM AND M(7)GPPPG CAP</scope>
    <scope>FUNCTION</scope>
    <scope>COFACTOR</scope>
    <scope>CATALYTIC ACTIVITY</scope>
    <scope>MUTAGENESIS OF GLU-234 AND ASP-236</scope>
</reference>
<reference evidence="15" key="7">
    <citation type="journal article" date="2017" name="Cell">
        <title>5' end nicotinamide adenine dinucleotide cap in human cells promotes RNA decay through DXO-mediated deNADding.</title>
        <authorList>
            <person name="Jiao X."/>
            <person name="Doamekpor S.K."/>
            <person name="Bird J.G."/>
            <person name="Nickels B.E."/>
            <person name="Tong L."/>
            <person name="Hart R.P."/>
            <person name="Kiledjian M."/>
        </authorList>
    </citation>
    <scope>X-RAY CRYSTALLOGRAPHY (2.10 ANGSTROMS) OF 27-384 IN COMPLEX WITH CALCIUM</scope>
    <scope>FUNCTION</scope>
    <scope>CATALYTIC ACTIVITY</scope>
    <scope>MUTAGENESIS OF GLU-234 AND ASP-236</scope>
</reference>
<reference evidence="16 17" key="8">
    <citation type="journal article" date="2018" name="Biochem. Biophys. Res. Commun.">
        <title>Molecular mechanism for the inhibition of DXO by adenosine 3',5'-bisphosphate.</title>
        <authorList>
            <person name="Yun J.S."/>
            <person name="Yoon J.H."/>
            <person name="Choi Y.J."/>
            <person name="Son Y.J."/>
            <person name="Kim S."/>
            <person name="Tong L."/>
            <person name="Chang J.H."/>
        </authorList>
    </citation>
    <scope>X-RAY CRYSTALLOGRAPHY (1.80 ANGSTROMS) OF 27-384 IN COMPLEX WITH MAGNESIUM AND ADENOSINE 3',5'-BISPHOSPHATE</scope>
    <scope>FUNCTION</scope>
    <scope>ACTIVITY REGULATION</scope>
    <scope>COFACTOR</scope>
    <scope>MUTAGENESIS OF GLU-234</scope>
</reference>
<reference key="9">
    <citation type="journal article" date="2020" name="Nucleic Acids Res.">
        <title>DXO/Rai1 enzymes remove 5'-end FAD and dephospho-CoA caps on RNAs.</title>
        <authorList>
            <person name="Doamekpor S.K."/>
            <person name="Grudzien-Nogalska E."/>
            <person name="Mlynarska-Cieslak A."/>
            <person name="Kowalska J."/>
            <person name="Kiledjian M."/>
            <person name="Tong L."/>
        </authorList>
    </citation>
    <scope>X-RAY CRYSTALLOGRAPHY (1.60 ANGSTROMS) OF IN COMPLEX WITH COA AND 3'-FADP</scope>
    <scope>FUNCTION</scope>
    <scope>CATALYTIC ACTIVITY</scope>
</reference>
<gene>
    <name evidence="10" type="primary">Dxo</name>
    <name evidence="9" type="synonym">Dom3z</name>
    <name type="synonym">Ng6</name>
</gene>
<name>DXO_MOUSE</name>